<dbReference type="GO" id="GO:0005576">
    <property type="term" value="C:extracellular region"/>
    <property type="evidence" value="ECO:0007669"/>
    <property type="project" value="UniProtKB-SubCell"/>
</dbReference>
<dbReference type="GO" id="GO:0005179">
    <property type="term" value="F:hormone activity"/>
    <property type="evidence" value="ECO:0007669"/>
    <property type="project" value="UniProtKB-KW"/>
</dbReference>
<dbReference type="GO" id="GO:0007218">
    <property type="term" value="P:neuropeptide signaling pathway"/>
    <property type="evidence" value="ECO:0007669"/>
    <property type="project" value="UniProtKB-KW"/>
</dbReference>
<dbReference type="InterPro" id="IPR013152">
    <property type="entry name" value="Gastrin/cholecystokinin_CS"/>
</dbReference>
<dbReference type="InterPro" id="IPR013259">
    <property type="entry name" value="Sulfakinin"/>
</dbReference>
<dbReference type="Pfam" id="PF08257">
    <property type="entry name" value="Sulfakinin"/>
    <property type="match status" value="1"/>
</dbReference>
<dbReference type="PROSITE" id="PS00259">
    <property type="entry name" value="GASTRIN"/>
    <property type="match status" value="1"/>
</dbReference>
<protein>
    <recommendedName>
        <fullName evidence="4">Sulfakinin-1</fullName>
        <shortName evidence="4">LucGr-SK-1</shortName>
    </recommendedName>
</protein>
<reference evidence="5" key="1">
    <citation type="journal article" date="2009" name="BMC Evol. Biol.">
        <title>A proteomic approach for studying insect phylogeny: CAPA peptides of ancient insect taxa (Dictyoptera, Blattoptera) as a test case.</title>
        <authorList>
            <person name="Roth S."/>
            <person name="Fromm B."/>
            <person name="Gaede G."/>
            <person name="Predel R."/>
        </authorList>
    </citation>
    <scope>PROTEIN SEQUENCE</scope>
    <scope>AMIDATION AT PHE-11</scope>
    <source>
        <tissue evidence="3">Corpora cardiaca</tissue>
    </source>
</reference>
<name>SK1_LUCGR</name>
<comment type="function">
    <text evidence="1">Myotropic peptide.</text>
</comment>
<comment type="subcellular location">
    <subcellularLocation>
        <location evidence="5">Secreted</location>
    </subcellularLocation>
</comment>
<comment type="similarity">
    <text evidence="2">Belongs to the gastrin/cholecystokinin family.</text>
</comment>
<evidence type="ECO:0000250" key="1">
    <source>
        <dbReference type="UniProtKB" id="P41493"/>
    </source>
</evidence>
<evidence type="ECO:0000255" key="2"/>
<evidence type="ECO:0000269" key="3">
    <source>
    </source>
</evidence>
<evidence type="ECO:0000303" key="4">
    <source>
    </source>
</evidence>
<evidence type="ECO:0000305" key="5"/>
<proteinExistence type="evidence at protein level"/>
<keyword id="KW-0027">Amidation</keyword>
<keyword id="KW-0903">Direct protein sequencing</keyword>
<keyword id="KW-0372">Hormone</keyword>
<keyword id="KW-0527">Neuropeptide</keyword>
<keyword id="KW-0964">Secreted</keyword>
<keyword id="KW-0765">Sulfation</keyword>
<accession>P85665</accession>
<organism>
    <name type="scientific">Lucihormetica grossei</name>
    <name type="common">Cockroach</name>
    <dbReference type="NCBI Taxonomy" id="521513"/>
    <lineage>
        <taxon>Eukaryota</taxon>
        <taxon>Metazoa</taxon>
        <taxon>Ecdysozoa</taxon>
        <taxon>Arthropoda</taxon>
        <taxon>Hexapoda</taxon>
        <taxon>Insecta</taxon>
        <taxon>Pterygota</taxon>
        <taxon>Neoptera</taxon>
        <taxon>Polyneoptera</taxon>
        <taxon>Dictyoptera</taxon>
        <taxon>Blattodea</taxon>
        <taxon>Blaberoidea</taxon>
        <taxon>Blaberidae</taxon>
        <taxon>Blaberinae</taxon>
        <taxon>Lucihormetica</taxon>
    </lineage>
</organism>
<sequence length="11" mass="1459">EQFEDYGHMRF</sequence>
<feature type="peptide" id="PRO_0000378882" description="Sulfakinin-1" evidence="3">
    <location>
        <begin position="1"/>
        <end position="11"/>
    </location>
</feature>
<feature type="modified residue" description="Sulfotyrosine" evidence="1">
    <location>
        <position position="6"/>
    </location>
</feature>
<feature type="modified residue" description="Phenylalanine amide" evidence="3">
    <location>
        <position position="11"/>
    </location>
</feature>